<reference key="1">
    <citation type="journal article" date="2009" name="PLoS Pathog.">
        <title>Genomic analyses of the microsporidian Nosema ceranae, an emergent pathogen of honey bees.</title>
        <authorList>
            <person name="Cornman R.S."/>
            <person name="Chen Y.P."/>
            <person name="Schatz M.C."/>
            <person name="Street C."/>
            <person name="Zhao Y."/>
            <person name="Desany B."/>
            <person name="Egholm M."/>
            <person name="Hutchison S."/>
            <person name="Pettis J.S."/>
            <person name="Lipkin W.I."/>
            <person name="Evans J.D."/>
        </authorList>
    </citation>
    <scope>NUCLEOTIDE SEQUENCE [LARGE SCALE GENOMIC DNA]</scope>
    <source>
        <strain>BRL01</strain>
    </source>
</reference>
<gene>
    <name evidence="1" type="primary">RPS0</name>
    <name type="ORF">NCER_100543</name>
</gene>
<keyword id="KW-0963">Cytoplasm</keyword>
<keyword id="KW-1185">Reference proteome</keyword>
<keyword id="KW-0687">Ribonucleoprotein</keyword>
<keyword id="KW-0689">Ribosomal protein</keyword>
<proteinExistence type="inferred from homology"/>
<evidence type="ECO:0000255" key="1">
    <source>
        <dbReference type="HAMAP-Rule" id="MF_03015"/>
    </source>
</evidence>
<evidence type="ECO:0000305" key="2"/>
<name>RSSA_VAIC1</name>
<protein>
    <recommendedName>
        <fullName evidence="1">Small ribosomal subunit protein uS2</fullName>
    </recommendedName>
    <alternativeName>
        <fullName evidence="2">40S ribosomal protein S0</fullName>
    </alternativeName>
</protein>
<sequence length="263" mass="29656">MAKVNIPIPNDFVKLILISQGHLGGIKTSKLMERYVFGTRKLENIKVIDIEKTWEKFILAARMFCSLKHPSDAVVVSTKTFGRKGVLKFCESTCATPVIGRFIPGTFCNNQVKRPLEPRVLIVSDPFADKQAVIEGSHVNLQTIAFCNTDNDVSFVDIVIPMNNRSPVSISAGLFILSRLIRFMKTGEPLDENMKEVELFIYRDPIELEKLVEEQKIIENANITIGEQELYEQEEFGNKAGWGIEPSLVSTEAVSEFSDNWKN</sequence>
<feature type="chain" id="PRO_0000389280" description="Small ribosomal subunit protein uS2">
    <location>
        <begin position="1"/>
        <end position="263"/>
    </location>
</feature>
<organism>
    <name type="scientific">Vairimorpha ceranae (strain BRL01)</name>
    <name type="common">Microsporidian parasite</name>
    <name type="synonym">Nosema ceranae</name>
    <dbReference type="NCBI Taxonomy" id="578460"/>
    <lineage>
        <taxon>Eukaryota</taxon>
        <taxon>Fungi</taxon>
        <taxon>Fungi incertae sedis</taxon>
        <taxon>Microsporidia</taxon>
        <taxon>Nosematidae</taxon>
        <taxon>Vairimorpha</taxon>
    </lineage>
</organism>
<comment type="function">
    <text evidence="1">Required for the assembly and/or stability of the 40S ribosomal subunit. Required for the processing of the 20S rRNA-precursor to mature 18S rRNA in a late step of the maturation of 40S ribosomal subunits.</text>
</comment>
<comment type="subunit">
    <text evidence="1">Component of the small ribosomal subunit. Mature ribosomes consist of a small (40S) and a large (60S) subunit. The 40S subunit contains about 33 different proteins and 1 molecule of RNA (18S). The 60S subunit contains about 49 different proteins and 3 molecules of RNA (25S, 5.8S and 5S). Interacts with RPS21.</text>
</comment>
<comment type="subcellular location">
    <subcellularLocation>
        <location evidence="1">Cytoplasm</location>
    </subcellularLocation>
</comment>
<comment type="similarity">
    <text evidence="1">Belongs to the universal ribosomal protein uS2 family.</text>
</comment>
<dbReference type="EMBL" id="ACOL01000030">
    <property type="protein sequence ID" value="EEQ82703.1"/>
    <property type="molecule type" value="Genomic_DNA"/>
</dbReference>
<dbReference type="RefSeq" id="XP_002996374.1">
    <property type="nucleotide sequence ID" value="XM_002996328.1"/>
</dbReference>
<dbReference type="SMR" id="C4V7V1"/>
<dbReference type="FunCoup" id="C4V7V1">
    <property type="interactions" value="150"/>
</dbReference>
<dbReference type="STRING" id="578460.C4V7V1"/>
<dbReference type="KEGG" id="nce:NCER_100543"/>
<dbReference type="VEuPathDB" id="MicrosporidiaDB:NCER_100543"/>
<dbReference type="HOGENOM" id="CLU_058171_2_0_1"/>
<dbReference type="InParanoid" id="C4V7V1"/>
<dbReference type="OMA" id="VKNFFEP"/>
<dbReference type="OrthoDB" id="3105at6029"/>
<dbReference type="Proteomes" id="UP000009082">
    <property type="component" value="Unassembled WGS sequence"/>
</dbReference>
<dbReference type="GO" id="GO:0022627">
    <property type="term" value="C:cytosolic small ribosomal subunit"/>
    <property type="evidence" value="ECO:0007669"/>
    <property type="project" value="UniProtKB-UniRule"/>
</dbReference>
<dbReference type="GO" id="GO:0003735">
    <property type="term" value="F:structural constituent of ribosome"/>
    <property type="evidence" value="ECO:0007669"/>
    <property type="project" value="UniProtKB-UniRule"/>
</dbReference>
<dbReference type="GO" id="GO:0000028">
    <property type="term" value="P:ribosomal small subunit assembly"/>
    <property type="evidence" value="ECO:0007669"/>
    <property type="project" value="UniProtKB-UniRule"/>
</dbReference>
<dbReference type="GO" id="GO:0006412">
    <property type="term" value="P:translation"/>
    <property type="evidence" value="ECO:0007669"/>
    <property type="project" value="UniProtKB-UniRule"/>
</dbReference>
<dbReference type="CDD" id="cd01425">
    <property type="entry name" value="RPS2"/>
    <property type="match status" value="1"/>
</dbReference>
<dbReference type="Gene3D" id="3.40.50.10490">
    <property type="entry name" value="Glucose-6-phosphate isomerase like protein, domain 1"/>
    <property type="match status" value="1"/>
</dbReference>
<dbReference type="HAMAP" id="MF_03015">
    <property type="entry name" value="Ribosomal_S2_euk"/>
    <property type="match status" value="1"/>
</dbReference>
<dbReference type="InterPro" id="IPR001865">
    <property type="entry name" value="Ribosomal_uS2"/>
</dbReference>
<dbReference type="InterPro" id="IPR027498">
    <property type="entry name" value="Ribosomal_uS2_euk"/>
</dbReference>
<dbReference type="InterPro" id="IPR005707">
    <property type="entry name" value="Ribosomal_uS2_euk/arc"/>
</dbReference>
<dbReference type="InterPro" id="IPR023591">
    <property type="entry name" value="Ribosomal_uS2_flav_dom_sf"/>
</dbReference>
<dbReference type="PANTHER" id="PTHR11489">
    <property type="entry name" value="40S RIBOSOMAL PROTEIN SA"/>
    <property type="match status" value="1"/>
</dbReference>
<dbReference type="Pfam" id="PF00318">
    <property type="entry name" value="Ribosomal_S2"/>
    <property type="match status" value="1"/>
</dbReference>
<dbReference type="PRINTS" id="PR00395">
    <property type="entry name" value="RIBOSOMALS2"/>
</dbReference>
<dbReference type="SUPFAM" id="SSF52313">
    <property type="entry name" value="Ribosomal protein S2"/>
    <property type="match status" value="1"/>
</dbReference>
<accession>C4V7V1</accession>